<name>TYSY_HYDCU</name>
<gene>
    <name evidence="1" type="primary">thyA</name>
    <name type="ordered locus">Tcr_0572</name>
</gene>
<accession>Q31I55</accession>
<comment type="function">
    <text evidence="1">Catalyzes the reductive methylation of 2'-deoxyuridine-5'-monophosphate (dUMP) to 2'-deoxythymidine-5'-monophosphate (dTMP) while utilizing 5,10-methylenetetrahydrofolate (mTHF) as the methyl donor and reductant in the reaction, yielding dihydrofolate (DHF) as a by-product. This enzymatic reaction provides an intracellular de novo source of dTMP, an essential precursor for DNA biosynthesis.</text>
</comment>
<comment type="catalytic activity">
    <reaction evidence="1">
        <text>dUMP + (6R)-5,10-methylene-5,6,7,8-tetrahydrofolate = 7,8-dihydrofolate + dTMP</text>
        <dbReference type="Rhea" id="RHEA:12104"/>
        <dbReference type="ChEBI" id="CHEBI:15636"/>
        <dbReference type="ChEBI" id="CHEBI:57451"/>
        <dbReference type="ChEBI" id="CHEBI:63528"/>
        <dbReference type="ChEBI" id="CHEBI:246422"/>
        <dbReference type="EC" id="2.1.1.45"/>
    </reaction>
</comment>
<comment type="pathway">
    <text evidence="1">Pyrimidine metabolism; dTTP biosynthesis.</text>
</comment>
<comment type="subunit">
    <text evidence="1">Homodimer.</text>
</comment>
<comment type="subcellular location">
    <subcellularLocation>
        <location evidence="1">Cytoplasm</location>
    </subcellularLocation>
</comment>
<comment type="similarity">
    <text evidence="1">Belongs to the thymidylate synthase family. Bacterial-type ThyA subfamily.</text>
</comment>
<organism>
    <name type="scientific">Hydrogenovibrio crunogenus (strain DSM 25203 / XCL-2)</name>
    <name type="common">Thiomicrospira crunogena</name>
    <dbReference type="NCBI Taxonomy" id="317025"/>
    <lineage>
        <taxon>Bacteria</taxon>
        <taxon>Pseudomonadati</taxon>
        <taxon>Pseudomonadota</taxon>
        <taxon>Gammaproteobacteria</taxon>
        <taxon>Thiotrichales</taxon>
        <taxon>Piscirickettsiaceae</taxon>
        <taxon>Hydrogenovibrio</taxon>
    </lineage>
</organism>
<reference key="1">
    <citation type="journal article" date="2006" name="PLoS Biol.">
        <title>The genome of deep-sea vent chemolithoautotroph Thiomicrospira crunogena XCL-2.</title>
        <authorList>
            <person name="Scott K.M."/>
            <person name="Sievert S.M."/>
            <person name="Abril F.N."/>
            <person name="Ball L.A."/>
            <person name="Barrett C.J."/>
            <person name="Blake R.A."/>
            <person name="Boller A.J."/>
            <person name="Chain P.S.G."/>
            <person name="Clark J.A."/>
            <person name="Davis C.R."/>
            <person name="Detter C."/>
            <person name="Do K.F."/>
            <person name="Dobrinski K.P."/>
            <person name="Faza B.I."/>
            <person name="Fitzpatrick K.A."/>
            <person name="Freyermuth S.K."/>
            <person name="Harmer T.L."/>
            <person name="Hauser L.J."/>
            <person name="Huegler M."/>
            <person name="Kerfeld C.A."/>
            <person name="Klotz M.G."/>
            <person name="Kong W.W."/>
            <person name="Land M."/>
            <person name="Lapidus A."/>
            <person name="Larimer F.W."/>
            <person name="Longo D.L."/>
            <person name="Lucas S."/>
            <person name="Malfatti S.A."/>
            <person name="Massey S.E."/>
            <person name="Martin D.D."/>
            <person name="McCuddin Z."/>
            <person name="Meyer F."/>
            <person name="Moore J.L."/>
            <person name="Ocampo L.H. Jr."/>
            <person name="Paul J.H."/>
            <person name="Paulsen I.T."/>
            <person name="Reep D.K."/>
            <person name="Ren Q."/>
            <person name="Ross R.L."/>
            <person name="Sato P.Y."/>
            <person name="Thomas P."/>
            <person name="Tinkham L.E."/>
            <person name="Zeruth G.T."/>
        </authorList>
    </citation>
    <scope>NUCLEOTIDE SEQUENCE [LARGE SCALE GENOMIC DNA]</scope>
    <source>
        <strain>DSM 25203 / XCL-2</strain>
    </source>
</reference>
<feature type="chain" id="PRO_1000000698" description="Thymidylate synthase">
    <location>
        <begin position="1"/>
        <end position="277"/>
    </location>
</feature>
<feature type="active site" description="Nucleophile" evidence="1">
    <location>
        <position position="159"/>
    </location>
</feature>
<feature type="binding site" description="in other chain" evidence="1">
    <location>
        <position position="21"/>
    </location>
    <ligand>
        <name>dUMP</name>
        <dbReference type="ChEBI" id="CHEBI:246422"/>
        <note>ligand shared between dimeric partners</note>
    </ligand>
</feature>
<feature type="binding site" evidence="1">
    <location>
        <position position="51"/>
    </location>
    <ligand>
        <name>(6R)-5,10-methylene-5,6,7,8-tetrahydrofolate</name>
        <dbReference type="ChEBI" id="CHEBI:15636"/>
    </ligand>
</feature>
<feature type="binding site" evidence="1">
    <location>
        <begin position="126"/>
        <end position="127"/>
    </location>
    <ligand>
        <name>dUMP</name>
        <dbReference type="ChEBI" id="CHEBI:246422"/>
        <note>ligand shared between dimeric partners</note>
    </ligand>
</feature>
<feature type="binding site" description="in other chain" evidence="1">
    <location>
        <begin position="179"/>
        <end position="182"/>
    </location>
    <ligand>
        <name>dUMP</name>
        <dbReference type="ChEBI" id="CHEBI:246422"/>
        <note>ligand shared between dimeric partners</note>
    </ligand>
</feature>
<feature type="binding site" evidence="1">
    <location>
        <position position="182"/>
    </location>
    <ligand>
        <name>(6R)-5,10-methylene-5,6,7,8-tetrahydrofolate</name>
        <dbReference type="ChEBI" id="CHEBI:15636"/>
    </ligand>
</feature>
<feature type="binding site" description="in other chain" evidence="1">
    <location>
        <position position="190"/>
    </location>
    <ligand>
        <name>dUMP</name>
        <dbReference type="ChEBI" id="CHEBI:246422"/>
        <note>ligand shared between dimeric partners</note>
    </ligand>
</feature>
<feature type="binding site" description="in other chain" evidence="1">
    <location>
        <begin position="220"/>
        <end position="222"/>
    </location>
    <ligand>
        <name>dUMP</name>
        <dbReference type="ChEBI" id="CHEBI:246422"/>
        <note>ligand shared between dimeric partners</note>
    </ligand>
</feature>
<feature type="binding site" evidence="1">
    <location>
        <position position="276"/>
    </location>
    <ligand>
        <name>(6R)-5,10-methylene-5,6,7,8-tetrahydrofolate</name>
        <dbReference type="ChEBI" id="CHEBI:15636"/>
    </ligand>
</feature>
<sequence length="277" mass="31773">MKQYLDLLKHITETGVAKGDRTGTGTRSVFGYQMRFNLEEGFPLVTTKKLHLKSIVYELLWFLNGDTNNQYLKEHGVRIWDEWATETGDLGPIYGRQWVAWEKPNGDTINQIEEVIQTLKKNPNSRRMLVSAWNPADLPDESMSPQENVKQGRMALATCHAFFQFYVANGKLSCQLYQRSADTFLGVPFNIASYALLTHMIAQQTDLEVGEFVWTGGDVHLYNNTLEQAELQMSRTPYALPKLKIKRKPPSIFDYEFDDFEIEGYESHPHIKAVVSV</sequence>
<keyword id="KW-0963">Cytoplasm</keyword>
<keyword id="KW-0489">Methyltransferase</keyword>
<keyword id="KW-0545">Nucleotide biosynthesis</keyword>
<keyword id="KW-0808">Transferase</keyword>
<proteinExistence type="inferred from homology"/>
<evidence type="ECO:0000255" key="1">
    <source>
        <dbReference type="HAMAP-Rule" id="MF_00008"/>
    </source>
</evidence>
<dbReference type="EC" id="2.1.1.45" evidence="1"/>
<dbReference type="EMBL" id="CP000109">
    <property type="protein sequence ID" value="ABB41168.1"/>
    <property type="molecule type" value="Genomic_DNA"/>
</dbReference>
<dbReference type="SMR" id="Q31I55"/>
<dbReference type="STRING" id="317025.Tcr_0572"/>
<dbReference type="KEGG" id="tcx:Tcr_0572"/>
<dbReference type="eggNOG" id="COG0207">
    <property type="taxonomic scope" value="Bacteria"/>
</dbReference>
<dbReference type="HOGENOM" id="CLU_021669_0_0_6"/>
<dbReference type="OrthoDB" id="9774633at2"/>
<dbReference type="UniPathway" id="UPA00575"/>
<dbReference type="GO" id="GO:0005829">
    <property type="term" value="C:cytosol"/>
    <property type="evidence" value="ECO:0007669"/>
    <property type="project" value="TreeGrafter"/>
</dbReference>
<dbReference type="GO" id="GO:0004799">
    <property type="term" value="F:thymidylate synthase activity"/>
    <property type="evidence" value="ECO:0007669"/>
    <property type="project" value="UniProtKB-UniRule"/>
</dbReference>
<dbReference type="GO" id="GO:0006231">
    <property type="term" value="P:dTMP biosynthetic process"/>
    <property type="evidence" value="ECO:0007669"/>
    <property type="project" value="UniProtKB-UniRule"/>
</dbReference>
<dbReference type="GO" id="GO:0006235">
    <property type="term" value="P:dTTP biosynthetic process"/>
    <property type="evidence" value="ECO:0007669"/>
    <property type="project" value="UniProtKB-UniRule"/>
</dbReference>
<dbReference type="GO" id="GO:0032259">
    <property type="term" value="P:methylation"/>
    <property type="evidence" value="ECO:0007669"/>
    <property type="project" value="UniProtKB-KW"/>
</dbReference>
<dbReference type="CDD" id="cd00351">
    <property type="entry name" value="TS_Pyrimidine_HMase"/>
    <property type="match status" value="1"/>
</dbReference>
<dbReference type="FunFam" id="3.30.572.10:FF:000013">
    <property type="entry name" value="Thymidylate synthase"/>
    <property type="match status" value="1"/>
</dbReference>
<dbReference type="Gene3D" id="3.30.572.10">
    <property type="entry name" value="Thymidylate synthase/dCMP hydroxymethylase domain"/>
    <property type="match status" value="1"/>
</dbReference>
<dbReference type="HAMAP" id="MF_00008">
    <property type="entry name" value="Thymidy_synth_bact"/>
    <property type="match status" value="1"/>
</dbReference>
<dbReference type="InterPro" id="IPR045097">
    <property type="entry name" value="Thymidate_synth/dCMP_Mease"/>
</dbReference>
<dbReference type="InterPro" id="IPR023451">
    <property type="entry name" value="Thymidate_synth/dCMP_Mease_dom"/>
</dbReference>
<dbReference type="InterPro" id="IPR036926">
    <property type="entry name" value="Thymidate_synth/dCMP_Mease_sf"/>
</dbReference>
<dbReference type="InterPro" id="IPR000398">
    <property type="entry name" value="Thymidylate_synthase"/>
</dbReference>
<dbReference type="NCBIfam" id="NF002497">
    <property type="entry name" value="PRK01827.1-3"/>
    <property type="match status" value="1"/>
</dbReference>
<dbReference type="NCBIfam" id="NF002499">
    <property type="entry name" value="PRK01827.1-5"/>
    <property type="match status" value="1"/>
</dbReference>
<dbReference type="NCBIfam" id="TIGR03284">
    <property type="entry name" value="thym_sym"/>
    <property type="match status" value="2"/>
</dbReference>
<dbReference type="PANTHER" id="PTHR11548:SF9">
    <property type="entry name" value="THYMIDYLATE SYNTHASE"/>
    <property type="match status" value="1"/>
</dbReference>
<dbReference type="PANTHER" id="PTHR11548">
    <property type="entry name" value="THYMIDYLATE SYNTHASE 1"/>
    <property type="match status" value="1"/>
</dbReference>
<dbReference type="Pfam" id="PF00303">
    <property type="entry name" value="Thymidylat_synt"/>
    <property type="match status" value="1"/>
</dbReference>
<dbReference type="PRINTS" id="PR00108">
    <property type="entry name" value="THYMDSNTHASE"/>
</dbReference>
<dbReference type="SUPFAM" id="SSF55831">
    <property type="entry name" value="Thymidylate synthase/dCMP hydroxymethylase"/>
    <property type="match status" value="1"/>
</dbReference>
<protein>
    <recommendedName>
        <fullName evidence="1">Thymidylate synthase</fullName>
        <shortName evidence="1">TS</shortName>
        <shortName evidence="1">TSase</shortName>
        <ecNumber evidence="1">2.1.1.45</ecNumber>
    </recommendedName>
</protein>